<comment type="similarity">
    <text evidence="1">Belongs to the UPF0148 family.</text>
</comment>
<sequence>MTNESEVGVKKAAELLRQGATMLEEACPICKMPLFKLKNGDVVCPVHGKVYIVKSDDEEKIVKRNLQLDEIESILIDGLYLSAKKMKEDPLDSERIIQIIRYLDALERLRKIKINSSE</sequence>
<evidence type="ECO:0000255" key="1">
    <source>
        <dbReference type="HAMAP-Rule" id="MF_00343"/>
    </source>
</evidence>
<protein>
    <recommendedName>
        <fullName evidence="1">UPF0148 protein LS215_1455</fullName>
    </recommendedName>
</protein>
<feature type="chain" id="PRO_1000205284" description="UPF0148 protein LS215_1455">
    <location>
        <begin position="1"/>
        <end position="118"/>
    </location>
</feature>
<proteinExistence type="inferred from homology"/>
<name>Y1455_SACI2</name>
<reference key="1">
    <citation type="journal article" date="2009" name="Proc. Natl. Acad. Sci. U.S.A.">
        <title>Biogeography of the Sulfolobus islandicus pan-genome.</title>
        <authorList>
            <person name="Reno M.L."/>
            <person name="Held N.L."/>
            <person name="Fields C.J."/>
            <person name="Burke P.V."/>
            <person name="Whitaker R.J."/>
        </authorList>
    </citation>
    <scope>NUCLEOTIDE SEQUENCE [LARGE SCALE GENOMIC DNA]</scope>
    <source>
        <strain>L.S.2.15 / Lassen #1</strain>
    </source>
</reference>
<accession>C3MPZ9</accession>
<dbReference type="EMBL" id="CP001399">
    <property type="protein sequence ID" value="ACP35462.1"/>
    <property type="molecule type" value="Genomic_DNA"/>
</dbReference>
<dbReference type="RefSeq" id="WP_010923073.1">
    <property type="nucleotide sequence ID" value="NC_012589.1"/>
</dbReference>
<dbReference type="SMR" id="C3MPZ9"/>
<dbReference type="KEGG" id="sis:LS215_1455"/>
<dbReference type="HOGENOM" id="CLU_142653_1_0_2"/>
<dbReference type="OrthoDB" id="26305at2157"/>
<dbReference type="Proteomes" id="UP000001747">
    <property type="component" value="Chromosome"/>
</dbReference>
<dbReference type="HAMAP" id="MF_00343">
    <property type="entry name" value="UPF0148"/>
    <property type="match status" value="1"/>
</dbReference>
<dbReference type="InterPro" id="IPR009563">
    <property type="entry name" value="SSSCA1"/>
</dbReference>
<dbReference type="InterPro" id="IPR022954">
    <property type="entry name" value="UPF0148"/>
</dbReference>
<dbReference type="NCBIfam" id="NF001644">
    <property type="entry name" value="PRK00420.1-1"/>
    <property type="match status" value="1"/>
</dbReference>
<dbReference type="NCBIfam" id="NF001647">
    <property type="entry name" value="PRK00420.1-4"/>
    <property type="match status" value="1"/>
</dbReference>
<dbReference type="Pfam" id="PF06677">
    <property type="entry name" value="Auto_anti-p27"/>
    <property type="match status" value="1"/>
</dbReference>
<organism>
    <name type="scientific">Saccharolobus islandicus (strain L.S.2.15 / Lassen #1)</name>
    <name type="common">Sulfolobus islandicus</name>
    <dbReference type="NCBI Taxonomy" id="429572"/>
    <lineage>
        <taxon>Archaea</taxon>
        <taxon>Thermoproteota</taxon>
        <taxon>Thermoprotei</taxon>
        <taxon>Sulfolobales</taxon>
        <taxon>Sulfolobaceae</taxon>
        <taxon>Saccharolobus</taxon>
    </lineage>
</organism>
<gene>
    <name type="ordered locus">LS215_1455</name>
</gene>